<name>Y3323_BACC1</name>
<proteinExistence type="inferred from homology"/>
<reference key="1">
    <citation type="journal article" date="2004" name="Nucleic Acids Res.">
        <title>The genome sequence of Bacillus cereus ATCC 10987 reveals metabolic adaptations and a large plasmid related to Bacillus anthracis pXO1.</title>
        <authorList>
            <person name="Rasko D.A."/>
            <person name="Ravel J."/>
            <person name="Oekstad O.A."/>
            <person name="Helgason E."/>
            <person name="Cer R.Z."/>
            <person name="Jiang L."/>
            <person name="Shores K.A."/>
            <person name="Fouts D.E."/>
            <person name="Tourasse N.J."/>
            <person name="Angiuoli S.V."/>
            <person name="Kolonay J.F."/>
            <person name="Nelson W.C."/>
            <person name="Kolstoe A.-B."/>
            <person name="Fraser C.M."/>
            <person name="Read T.D."/>
        </authorList>
    </citation>
    <scope>NUCLEOTIDE SEQUENCE [LARGE SCALE GENOMIC DNA]</scope>
    <source>
        <strain>ATCC 10987 / NRS 248</strain>
    </source>
</reference>
<protein>
    <recommendedName>
        <fullName>Putative ABC transporter ATP-binding protein BCE_3323</fullName>
        <ecNumber>7.-.-.-</ecNumber>
    </recommendedName>
</protein>
<feature type="chain" id="PRO_0000091975" description="Putative ABC transporter ATP-binding protein BCE_3323">
    <location>
        <begin position="1"/>
        <end position="553"/>
    </location>
</feature>
<feature type="domain" description="ABC transporter 1" evidence="2">
    <location>
        <begin position="7"/>
        <end position="245"/>
    </location>
</feature>
<feature type="domain" description="ABC transporter 2" evidence="2">
    <location>
        <begin position="295"/>
        <end position="527"/>
    </location>
</feature>
<feature type="binding site" evidence="2">
    <location>
        <begin position="41"/>
        <end position="48"/>
    </location>
    <ligand>
        <name>ATP</name>
        <dbReference type="ChEBI" id="CHEBI:30616"/>
        <label>1</label>
    </ligand>
</feature>
<feature type="binding site" evidence="2">
    <location>
        <begin position="329"/>
        <end position="336"/>
    </location>
    <ligand>
        <name>ATP</name>
        <dbReference type="ChEBI" id="CHEBI:30616"/>
        <label>2</label>
    </ligand>
</feature>
<sequence length="553" mass="62852">MDMVAHAEINNLSFVYADENEKALQHISLSVQKGEFIALAGGSGSGKTTLLKHLKKELLPIGKRTGDTYYDGTLLENVPDLLSAQEIGMVFQNPENQLVMDTVIQELAFSLENIGLPSHIIQKRIAELISFLGFQDLLHQSVHTLSGGQKQLVNLAAVLVMQPKLLLLDEPTAQLDPIAAKEFLGLLKRINEELGITIVLSEHRLDEVIPLATRVICMNNGRIVYDGSPKRVIANMWEVEGFRPFIPQIPRLFLEWNAKDIPFTVREAQMKMNDFSAISYVNEPIVQREKQEVILSAEHISFQYEKNSPLILRDLTVSIEKGKWVALVGKNGTGKSTLLTILAGLQKARRGKVKWNGKVIHKIDSKERFKSIGYVSQHPYYHFTFDTVWDEVYERARELYGEQGKEIAEQQLKKFWLYALKERHPHDCSGGEQQLLALCTTLLSKPTLLLLDEPTKGLDPWKKERVGELFRKLQKEGTTIVMATHDIEFAAKYVDQCMMLFDGAVIMNDAPKEFFSGNFFYTTSINRFIRKELPYALTWEDVYEACPNDMLHS</sequence>
<keyword id="KW-0067">ATP-binding</keyword>
<keyword id="KW-1003">Cell membrane</keyword>
<keyword id="KW-0472">Membrane</keyword>
<keyword id="KW-0547">Nucleotide-binding</keyword>
<keyword id="KW-0677">Repeat</keyword>
<keyword id="KW-1278">Translocase</keyword>
<keyword id="KW-0813">Transport</keyword>
<organism>
    <name type="scientific">Bacillus cereus (strain ATCC 10987 / NRS 248)</name>
    <dbReference type="NCBI Taxonomy" id="222523"/>
    <lineage>
        <taxon>Bacteria</taxon>
        <taxon>Bacillati</taxon>
        <taxon>Bacillota</taxon>
        <taxon>Bacilli</taxon>
        <taxon>Bacillales</taxon>
        <taxon>Bacillaceae</taxon>
        <taxon>Bacillus</taxon>
        <taxon>Bacillus cereus group</taxon>
    </lineage>
</organism>
<accession>Q734T1</accession>
<comment type="function">
    <text evidence="1">Probably part of an ABC transporter complex. Responsible for energy coupling to the transport system (By similarity).</text>
</comment>
<comment type="subcellular location">
    <subcellularLocation>
        <location evidence="1">Cell membrane</location>
        <topology evidence="1">Peripheral membrane protein</topology>
    </subcellularLocation>
</comment>
<comment type="similarity">
    <text evidence="3">Belongs to the ABC transporter superfamily.</text>
</comment>
<dbReference type="EC" id="7.-.-.-"/>
<dbReference type="EMBL" id="AE017194">
    <property type="protein sequence ID" value="AAS42231.1"/>
    <property type="molecule type" value="Genomic_DNA"/>
</dbReference>
<dbReference type="SMR" id="Q734T1"/>
<dbReference type="KEGG" id="bca:BCE_3323"/>
<dbReference type="HOGENOM" id="CLU_000604_86_7_9"/>
<dbReference type="Proteomes" id="UP000002527">
    <property type="component" value="Chromosome"/>
</dbReference>
<dbReference type="GO" id="GO:0043190">
    <property type="term" value="C:ATP-binding cassette (ABC) transporter complex"/>
    <property type="evidence" value="ECO:0007669"/>
    <property type="project" value="TreeGrafter"/>
</dbReference>
<dbReference type="GO" id="GO:0005524">
    <property type="term" value="F:ATP binding"/>
    <property type="evidence" value="ECO:0007669"/>
    <property type="project" value="UniProtKB-KW"/>
</dbReference>
<dbReference type="GO" id="GO:0016887">
    <property type="term" value="F:ATP hydrolysis activity"/>
    <property type="evidence" value="ECO:0007669"/>
    <property type="project" value="InterPro"/>
</dbReference>
<dbReference type="GO" id="GO:0042626">
    <property type="term" value="F:ATPase-coupled transmembrane transporter activity"/>
    <property type="evidence" value="ECO:0007669"/>
    <property type="project" value="TreeGrafter"/>
</dbReference>
<dbReference type="CDD" id="cd03225">
    <property type="entry name" value="ABC_cobalt_CbiO_domain1"/>
    <property type="match status" value="1"/>
</dbReference>
<dbReference type="CDD" id="cd03226">
    <property type="entry name" value="ABC_cobalt_CbiO_domain2"/>
    <property type="match status" value="1"/>
</dbReference>
<dbReference type="Gene3D" id="3.40.50.300">
    <property type="entry name" value="P-loop containing nucleotide triphosphate hydrolases"/>
    <property type="match status" value="2"/>
</dbReference>
<dbReference type="InterPro" id="IPR003593">
    <property type="entry name" value="AAA+_ATPase"/>
</dbReference>
<dbReference type="InterPro" id="IPR003439">
    <property type="entry name" value="ABC_transporter-like_ATP-bd"/>
</dbReference>
<dbReference type="InterPro" id="IPR017871">
    <property type="entry name" value="ABC_transporter-like_CS"/>
</dbReference>
<dbReference type="InterPro" id="IPR015856">
    <property type="entry name" value="ABC_transpr_CbiO/EcfA_su"/>
</dbReference>
<dbReference type="InterPro" id="IPR050095">
    <property type="entry name" value="ECF_ABC_transporter_ATP-bd"/>
</dbReference>
<dbReference type="InterPro" id="IPR027417">
    <property type="entry name" value="P-loop_NTPase"/>
</dbReference>
<dbReference type="NCBIfam" id="NF010167">
    <property type="entry name" value="PRK13648.1"/>
    <property type="match status" value="2"/>
</dbReference>
<dbReference type="PANTHER" id="PTHR43553:SF27">
    <property type="entry name" value="ENERGY-COUPLING FACTOR TRANSPORTER ATP-BINDING PROTEIN ECFA2"/>
    <property type="match status" value="1"/>
</dbReference>
<dbReference type="PANTHER" id="PTHR43553">
    <property type="entry name" value="HEAVY METAL TRANSPORTER"/>
    <property type="match status" value="1"/>
</dbReference>
<dbReference type="Pfam" id="PF00005">
    <property type="entry name" value="ABC_tran"/>
    <property type="match status" value="2"/>
</dbReference>
<dbReference type="SMART" id="SM00382">
    <property type="entry name" value="AAA"/>
    <property type="match status" value="2"/>
</dbReference>
<dbReference type="SUPFAM" id="SSF52540">
    <property type="entry name" value="P-loop containing nucleoside triphosphate hydrolases"/>
    <property type="match status" value="2"/>
</dbReference>
<dbReference type="PROSITE" id="PS00211">
    <property type="entry name" value="ABC_TRANSPORTER_1"/>
    <property type="match status" value="2"/>
</dbReference>
<dbReference type="PROSITE" id="PS50893">
    <property type="entry name" value="ABC_TRANSPORTER_2"/>
    <property type="match status" value="2"/>
</dbReference>
<evidence type="ECO:0000250" key="1"/>
<evidence type="ECO:0000255" key="2">
    <source>
        <dbReference type="PROSITE-ProRule" id="PRU00434"/>
    </source>
</evidence>
<evidence type="ECO:0000305" key="3"/>
<gene>
    <name type="ordered locus">BCE_3323</name>
</gene>